<keyword id="KW-0150">Chloroplast</keyword>
<keyword id="KW-0934">Plastid</keyword>
<keyword id="KW-0687">Ribonucleoprotein</keyword>
<keyword id="KW-0689">Ribosomal protein</keyword>
<keyword id="KW-0694">RNA-binding</keyword>
<keyword id="KW-0699">rRNA-binding</keyword>
<proteinExistence type="inferred from homology"/>
<accession>Q4VZK6</accession>
<accession>A5J1X7</accession>
<name>RK23_CUCSA</name>
<organism>
    <name type="scientific">Cucumis sativus</name>
    <name type="common">Cucumber</name>
    <dbReference type="NCBI Taxonomy" id="3659"/>
    <lineage>
        <taxon>Eukaryota</taxon>
        <taxon>Viridiplantae</taxon>
        <taxon>Streptophyta</taxon>
        <taxon>Embryophyta</taxon>
        <taxon>Tracheophyta</taxon>
        <taxon>Spermatophyta</taxon>
        <taxon>Magnoliopsida</taxon>
        <taxon>eudicotyledons</taxon>
        <taxon>Gunneridae</taxon>
        <taxon>Pentapetalae</taxon>
        <taxon>rosids</taxon>
        <taxon>fabids</taxon>
        <taxon>Cucurbitales</taxon>
        <taxon>Cucurbitaceae</taxon>
        <taxon>Benincaseae</taxon>
        <taxon>Cucumis</taxon>
    </lineage>
</organism>
<comment type="function">
    <text evidence="1">Binds to 23S rRNA.</text>
</comment>
<comment type="subunit">
    <text evidence="1">Part of the 50S ribosomal subunit.</text>
</comment>
<comment type="subcellular location">
    <subcellularLocation>
        <location>Plastid</location>
        <location>Chloroplast</location>
    </subcellularLocation>
</comment>
<comment type="similarity">
    <text evidence="2">Belongs to the universal ribosomal protein uL23 family.</text>
</comment>
<gene>
    <name type="primary">rpl23-A</name>
    <name type="ordered locus">CsCp084</name>
</gene>
<gene>
    <name type="primary">rpl23-B</name>
    <name type="ordered locus">CsCp129</name>
</gene>
<sequence>MDGIKYAVFTDKSIRLLGKNQYTSNVESGSTRTEIKHWVELFFGVKVIAMNSHRLPGKGRRMGPIMGHTMHYRRMIITLQPGYSIPPLRKKRT</sequence>
<protein>
    <recommendedName>
        <fullName evidence="2">Large ribosomal subunit protein uL23cz/uL23cy</fullName>
    </recommendedName>
    <alternativeName>
        <fullName>50S ribosomal protein L23, chloroplastic</fullName>
    </alternativeName>
</protein>
<dbReference type="EMBL" id="DQ119058">
    <property type="protein sequence ID" value="AAZ94692.1"/>
    <property type="molecule type" value="Genomic_DNA"/>
</dbReference>
<dbReference type="EMBL" id="DQ119058">
    <property type="protein sequence ID" value="AAZ94709.1"/>
    <property type="molecule type" value="Genomic_DNA"/>
</dbReference>
<dbReference type="EMBL" id="AJ970307">
    <property type="protein sequence ID" value="CAJ00801.1"/>
    <property type="molecule type" value="Genomic_DNA"/>
</dbReference>
<dbReference type="EMBL" id="AJ970307">
    <property type="protein sequence ID" value="CAJ00821.1"/>
    <property type="molecule type" value="Genomic_DNA"/>
</dbReference>
<dbReference type="EMBL" id="DQ865975">
    <property type="protein sequence ID" value="ABI97459.1"/>
    <property type="molecule type" value="Genomic_DNA"/>
</dbReference>
<dbReference type="EMBL" id="DQ865975">
    <property type="protein sequence ID" value="ABI97476.1"/>
    <property type="molecule type" value="Genomic_DNA"/>
</dbReference>
<dbReference type="EMBL" id="DQ865976">
    <property type="protein sequence ID" value="ABI98788.1"/>
    <property type="molecule type" value="Genomic_DNA"/>
</dbReference>
<dbReference type="EMBL" id="DQ865976">
    <property type="protein sequence ID" value="ABI98808.1"/>
    <property type="molecule type" value="Genomic_DNA"/>
</dbReference>
<dbReference type="SMR" id="Q4VZK6"/>
<dbReference type="KEGG" id="csv:3429296"/>
<dbReference type="KEGG" id="csv:3429297"/>
<dbReference type="OrthoDB" id="1848840at2759"/>
<dbReference type="GO" id="GO:0009507">
    <property type="term" value="C:chloroplast"/>
    <property type="evidence" value="ECO:0007669"/>
    <property type="project" value="UniProtKB-SubCell"/>
</dbReference>
<dbReference type="GO" id="GO:1990904">
    <property type="term" value="C:ribonucleoprotein complex"/>
    <property type="evidence" value="ECO:0007669"/>
    <property type="project" value="UniProtKB-KW"/>
</dbReference>
<dbReference type="GO" id="GO:0005840">
    <property type="term" value="C:ribosome"/>
    <property type="evidence" value="ECO:0007669"/>
    <property type="project" value="UniProtKB-KW"/>
</dbReference>
<dbReference type="GO" id="GO:0003729">
    <property type="term" value="F:mRNA binding"/>
    <property type="evidence" value="ECO:0007669"/>
    <property type="project" value="UniProtKB-ARBA"/>
</dbReference>
<dbReference type="GO" id="GO:0019843">
    <property type="term" value="F:rRNA binding"/>
    <property type="evidence" value="ECO:0007669"/>
    <property type="project" value="UniProtKB-UniRule"/>
</dbReference>
<dbReference type="GO" id="GO:0003735">
    <property type="term" value="F:structural constituent of ribosome"/>
    <property type="evidence" value="ECO:0007669"/>
    <property type="project" value="InterPro"/>
</dbReference>
<dbReference type="GO" id="GO:0006412">
    <property type="term" value="P:translation"/>
    <property type="evidence" value="ECO:0007669"/>
    <property type="project" value="UniProtKB-UniRule"/>
</dbReference>
<dbReference type="FunFam" id="3.30.70.330:FF:000002">
    <property type="entry name" value="50S ribosomal protein L23, chloroplastic"/>
    <property type="match status" value="1"/>
</dbReference>
<dbReference type="Gene3D" id="3.30.70.330">
    <property type="match status" value="1"/>
</dbReference>
<dbReference type="HAMAP" id="MF_01369_B">
    <property type="entry name" value="Ribosomal_uL23_B"/>
    <property type="match status" value="1"/>
</dbReference>
<dbReference type="InterPro" id="IPR012677">
    <property type="entry name" value="Nucleotide-bd_a/b_plait_sf"/>
</dbReference>
<dbReference type="InterPro" id="IPR013025">
    <property type="entry name" value="Ribosomal_uL23-like"/>
</dbReference>
<dbReference type="InterPro" id="IPR012678">
    <property type="entry name" value="Ribosomal_uL23/eL15/eS24_sf"/>
</dbReference>
<dbReference type="InterPro" id="IPR001014">
    <property type="entry name" value="Ribosomal_uL23_CS"/>
</dbReference>
<dbReference type="PANTHER" id="PTHR11620">
    <property type="entry name" value="60S RIBOSOMAL PROTEIN L23A"/>
    <property type="match status" value="1"/>
</dbReference>
<dbReference type="Pfam" id="PF00276">
    <property type="entry name" value="Ribosomal_L23"/>
    <property type="match status" value="1"/>
</dbReference>
<dbReference type="SUPFAM" id="SSF54189">
    <property type="entry name" value="Ribosomal proteins S24e, L23 and L15e"/>
    <property type="match status" value="1"/>
</dbReference>
<dbReference type="PROSITE" id="PS00050">
    <property type="entry name" value="RIBOSOMAL_L23"/>
    <property type="match status" value="1"/>
</dbReference>
<geneLocation type="chloroplast"/>
<reference key="1">
    <citation type="journal article" date="2006" name="Plant Cell Rep.">
        <title>Complete sequence and organization of the cucumber (Cucumis sativus L. cv. Baekmibaekdadagi) chloroplast genome.</title>
        <authorList>
            <person name="Kim J.-S."/>
            <person name="Jung J.D."/>
            <person name="Lee J.-A."/>
            <person name="Park H.-W."/>
            <person name="Oh K.-H."/>
            <person name="Jeong W.J."/>
            <person name="Choi D.-W."/>
            <person name="Liu J.R."/>
            <person name="Cho K.Y."/>
        </authorList>
    </citation>
    <scope>NUCLEOTIDE SEQUENCE [LARGE SCALE GENOMIC DNA]</scope>
    <source>
        <strain>cv. Baekmibaekdadagi</strain>
    </source>
</reference>
<reference key="2">
    <citation type="journal article" date="2007" name="Cell. Mol. Biol. Lett.">
        <title>The complete structure of the cucumber (Cucumis sativus L.) chloroplast genome: its composition and comparative analysis.</title>
        <authorList>
            <person name="Plader W.W."/>
            <person name="Yukawa Y."/>
            <person name="Sugiura M."/>
            <person name="Malepszy S."/>
        </authorList>
    </citation>
    <scope>NUCLEOTIDE SEQUENCE [LARGE SCALE GENOMIC DNA]</scope>
    <source>
        <strain>cv. Borszczagowski</strain>
    </source>
</reference>
<reference key="3">
    <citation type="journal article" date="2007" name="Genome">
        <title>Sequencing cucumber (Cucumis sativus L.) chloroplast genomes identifies differences between chilling-tolerant and -susceptible cucumber lines.</title>
        <authorList>
            <person name="Chung S.-M."/>
            <person name="Gordon V.S."/>
            <person name="Staub J.E."/>
        </authorList>
    </citation>
    <scope>NUCLEOTIDE SEQUENCE [LARGE SCALE GENOMIC DNA]</scope>
    <source>
        <strain>cv. Chipper</strain>
        <strain>cv. Gy14</strain>
    </source>
</reference>
<evidence type="ECO:0000250" key="1"/>
<evidence type="ECO:0000305" key="2"/>
<feature type="chain" id="PRO_0000272894" description="Large ribosomal subunit protein uL23cz/uL23cy">
    <location>
        <begin position="1"/>
        <end position="93"/>
    </location>
</feature>